<keyword id="KW-0227">DNA damage</keyword>
<keyword id="KW-0233">DNA recombination</keyword>
<keyword id="KW-0234">DNA repair</keyword>
<keyword id="KW-0479">Metal-binding</keyword>
<keyword id="KW-0862">Zinc</keyword>
<keyword id="KW-0863">Zinc-finger</keyword>
<proteinExistence type="inferred from homology"/>
<accession>Q68WU0</accession>
<protein>
    <recommendedName>
        <fullName evidence="1">Recombination protein RecR</fullName>
    </recommendedName>
</protein>
<feature type="chain" id="PRO_0000190377" description="Recombination protein RecR">
    <location>
        <begin position="1"/>
        <end position="199"/>
    </location>
</feature>
<feature type="domain" description="Toprim" evidence="1">
    <location>
        <begin position="80"/>
        <end position="175"/>
    </location>
</feature>
<feature type="zinc finger region" description="C4-type" evidence="1">
    <location>
        <begin position="57"/>
        <end position="72"/>
    </location>
</feature>
<dbReference type="EMBL" id="AE017197">
    <property type="protein sequence ID" value="AAU03902.1"/>
    <property type="molecule type" value="Genomic_DNA"/>
</dbReference>
<dbReference type="RefSeq" id="WP_011190886.1">
    <property type="nucleotide sequence ID" value="NC_006142.1"/>
</dbReference>
<dbReference type="SMR" id="Q68WU0"/>
<dbReference type="KEGG" id="rty:RT0425"/>
<dbReference type="eggNOG" id="COG0353">
    <property type="taxonomic scope" value="Bacteria"/>
</dbReference>
<dbReference type="HOGENOM" id="CLU_060739_1_0_5"/>
<dbReference type="OrthoDB" id="9802672at2"/>
<dbReference type="Proteomes" id="UP000000604">
    <property type="component" value="Chromosome"/>
</dbReference>
<dbReference type="GO" id="GO:0003677">
    <property type="term" value="F:DNA binding"/>
    <property type="evidence" value="ECO:0007669"/>
    <property type="project" value="UniProtKB-UniRule"/>
</dbReference>
<dbReference type="GO" id="GO:0008270">
    <property type="term" value="F:zinc ion binding"/>
    <property type="evidence" value="ECO:0007669"/>
    <property type="project" value="UniProtKB-KW"/>
</dbReference>
<dbReference type="GO" id="GO:0006310">
    <property type="term" value="P:DNA recombination"/>
    <property type="evidence" value="ECO:0007669"/>
    <property type="project" value="UniProtKB-UniRule"/>
</dbReference>
<dbReference type="GO" id="GO:0006281">
    <property type="term" value="P:DNA repair"/>
    <property type="evidence" value="ECO:0007669"/>
    <property type="project" value="UniProtKB-UniRule"/>
</dbReference>
<dbReference type="CDD" id="cd01025">
    <property type="entry name" value="TOPRIM_recR"/>
    <property type="match status" value="1"/>
</dbReference>
<dbReference type="Gene3D" id="3.40.1360.10">
    <property type="match status" value="1"/>
</dbReference>
<dbReference type="Gene3D" id="6.10.250.240">
    <property type="match status" value="1"/>
</dbReference>
<dbReference type="Gene3D" id="1.10.8.420">
    <property type="entry name" value="RecR Domain 1"/>
    <property type="match status" value="1"/>
</dbReference>
<dbReference type="HAMAP" id="MF_00017">
    <property type="entry name" value="RecR"/>
    <property type="match status" value="1"/>
</dbReference>
<dbReference type="InterPro" id="IPR000093">
    <property type="entry name" value="DNA_Rcmb_RecR"/>
</dbReference>
<dbReference type="InterPro" id="IPR023627">
    <property type="entry name" value="Rcmb_RecR"/>
</dbReference>
<dbReference type="InterPro" id="IPR015967">
    <property type="entry name" value="Rcmb_RecR_Znf"/>
</dbReference>
<dbReference type="InterPro" id="IPR006171">
    <property type="entry name" value="TOPRIM_dom"/>
</dbReference>
<dbReference type="InterPro" id="IPR034137">
    <property type="entry name" value="TOPRIM_RecR"/>
</dbReference>
<dbReference type="NCBIfam" id="TIGR00615">
    <property type="entry name" value="recR"/>
    <property type="match status" value="1"/>
</dbReference>
<dbReference type="PANTHER" id="PTHR30446">
    <property type="entry name" value="RECOMBINATION PROTEIN RECR"/>
    <property type="match status" value="1"/>
</dbReference>
<dbReference type="PANTHER" id="PTHR30446:SF0">
    <property type="entry name" value="RECOMBINATION PROTEIN RECR"/>
    <property type="match status" value="1"/>
</dbReference>
<dbReference type="Pfam" id="PF21175">
    <property type="entry name" value="RecR_C"/>
    <property type="match status" value="1"/>
</dbReference>
<dbReference type="Pfam" id="PF21176">
    <property type="entry name" value="RecR_HhH"/>
    <property type="match status" value="1"/>
</dbReference>
<dbReference type="Pfam" id="PF02132">
    <property type="entry name" value="RecR_ZnF"/>
    <property type="match status" value="1"/>
</dbReference>
<dbReference type="Pfam" id="PF13662">
    <property type="entry name" value="Toprim_4"/>
    <property type="match status" value="1"/>
</dbReference>
<dbReference type="SMART" id="SM00493">
    <property type="entry name" value="TOPRIM"/>
    <property type="match status" value="1"/>
</dbReference>
<dbReference type="SUPFAM" id="SSF111304">
    <property type="entry name" value="Recombination protein RecR"/>
    <property type="match status" value="1"/>
</dbReference>
<dbReference type="PROSITE" id="PS01300">
    <property type="entry name" value="RECR"/>
    <property type="match status" value="1"/>
</dbReference>
<dbReference type="PROSITE" id="PS50880">
    <property type="entry name" value="TOPRIM"/>
    <property type="match status" value="1"/>
</dbReference>
<organism>
    <name type="scientific">Rickettsia typhi (strain ATCC VR-144 / Wilmington)</name>
    <dbReference type="NCBI Taxonomy" id="257363"/>
    <lineage>
        <taxon>Bacteria</taxon>
        <taxon>Pseudomonadati</taxon>
        <taxon>Pseudomonadota</taxon>
        <taxon>Alphaproteobacteria</taxon>
        <taxon>Rickettsiales</taxon>
        <taxon>Rickettsiaceae</taxon>
        <taxon>Rickettsieae</taxon>
        <taxon>Rickettsia</taxon>
        <taxon>typhus group</taxon>
    </lineage>
</organism>
<evidence type="ECO:0000255" key="1">
    <source>
        <dbReference type="HAMAP-Rule" id="MF_00017"/>
    </source>
</evidence>
<name>RECR_RICTY</name>
<comment type="function">
    <text evidence="1">May play a role in DNA repair. It seems to be involved in an RecBC-independent recombinational process of DNA repair. It may act with RecF and RecO.</text>
</comment>
<comment type="similarity">
    <text evidence="1">Belongs to the RecR family.</text>
</comment>
<sequence>MNKTNDIDQLIYLFSKLPGLGIRSARRIVLYLLQDKDVRLKSLINHLIELDKKIVKCEICGNMDTKNICHICSSEHRDKSTIAIVETVAELCAMERSGNFKGLYHVLGHNLSAASRQNPRILRLPELLKRCFVENIKEVIIATNSTLEGQTTAYFIIEYLKEHPAKISRLASGIPIGGELDYLDEGTLSAAINLRQPCE</sequence>
<reference key="1">
    <citation type="journal article" date="2004" name="J. Bacteriol.">
        <title>Complete genome sequence of Rickettsia typhi and comparison with sequences of other Rickettsiae.</title>
        <authorList>
            <person name="McLeod M.P."/>
            <person name="Qin X."/>
            <person name="Karpathy S.E."/>
            <person name="Gioia J."/>
            <person name="Highlander S.K."/>
            <person name="Fox G.E."/>
            <person name="McNeill T.Z."/>
            <person name="Jiang H."/>
            <person name="Muzny D."/>
            <person name="Jacob L.S."/>
            <person name="Hawes A.C."/>
            <person name="Sodergren E."/>
            <person name="Gill R."/>
            <person name="Hume J."/>
            <person name="Morgan M."/>
            <person name="Fan G."/>
            <person name="Amin A.G."/>
            <person name="Gibbs R.A."/>
            <person name="Hong C."/>
            <person name="Yu X.-J."/>
            <person name="Walker D.H."/>
            <person name="Weinstock G.M."/>
        </authorList>
    </citation>
    <scope>NUCLEOTIDE SEQUENCE [LARGE SCALE GENOMIC DNA]</scope>
    <source>
        <strain>ATCC VR-144 / Wilmington</strain>
    </source>
</reference>
<gene>
    <name evidence="1" type="primary">recR</name>
    <name type="ordered locus">RT0425</name>
</gene>